<protein>
    <recommendedName>
        <fullName evidence="1">Small ribosomal subunit protein uS12</fullName>
    </recommendedName>
    <alternativeName>
        <fullName evidence="3">30S ribosomal protein S12</fullName>
    </alternativeName>
</protein>
<evidence type="ECO:0000255" key="1">
    <source>
        <dbReference type="HAMAP-Rule" id="MF_00403"/>
    </source>
</evidence>
<evidence type="ECO:0000256" key="2">
    <source>
        <dbReference type="SAM" id="MobiDB-lite"/>
    </source>
</evidence>
<evidence type="ECO:0000305" key="3"/>
<feature type="chain" id="PRO_0000146228" description="Small ribosomal subunit protein uS12">
    <location>
        <begin position="1"/>
        <end position="140"/>
    </location>
</feature>
<feature type="region of interest" description="Disordered" evidence="2">
    <location>
        <begin position="33"/>
        <end position="55"/>
    </location>
</feature>
<accession>Q5L402</accession>
<reference key="1">
    <citation type="journal article" date="2004" name="Nucleic Acids Res.">
        <title>Thermoadaptation trait revealed by the genome sequence of thermophilic Geobacillus kaustophilus.</title>
        <authorList>
            <person name="Takami H."/>
            <person name="Takaki Y."/>
            <person name="Chee G.-J."/>
            <person name="Nishi S."/>
            <person name="Shimamura S."/>
            <person name="Suzuki H."/>
            <person name="Matsui S."/>
            <person name="Uchiyama I."/>
        </authorList>
    </citation>
    <scope>NUCLEOTIDE SEQUENCE [LARGE SCALE GENOMIC DNA]</scope>
    <source>
        <strain>HTA426</strain>
    </source>
</reference>
<proteinExistence type="inferred from homology"/>
<sequence>MPTINQLVRKGREKKVVKSKSPALNKGYNSFKKEQTNVSSPQKRGVCTRVGTMTPKKPNSALRKYARVRLTNGIEVTAYIPGIGHNLQEHSVVLIRGGRVKDLPGVRYHIIRGALDAAGVANRMQGRSKYGAKKPKAAKK</sequence>
<name>RS12_GEOKA</name>
<gene>
    <name evidence="1" type="primary">rpsL</name>
    <name type="ordered locus">GK0101</name>
</gene>
<comment type="function">
    <text evidence="1">With S4 and S5 plays an important role in translational accuracy.</text>
</comment>
<comment type="function">
    <text evidence="1">Interacts with and stabilizes bases of the 16S rRNA that are involved in tRNA selection in the A site and with the mRNA backbone. Located at the interface of the 30S and 50S subunits, it traverses the body of the 30S subunit contacting proteins on the other side and probably holding the rRNA structure together. The combined cluster of proteins S8, S12 and S17 appears to hold together the shoulder and platform of the 30S subunit.</text>
</comment>
<comment type="subunit">
    <text evidence="1">Part of the 30S ribosomal subunit. Contacts proteins S8 and S17. May interact with IF1 in the 30S initiation complex.</text>
</comment>
<comment type="similarity">
    <text evidence="1">Belongs to the universal ribosomal protein uS12 family.</text>
</comment>
<comment type="caution">
    <text evidence="3">Because the enzyme that would modify Asp-102 to 3-methylthioaspartic acid has not been found in the proteome of this organism, that modification is not predicted.</text>
</comment>
<dbReference type="EMBL" id="BA000043">
    <property type="protein sequence ID" value="BAD74386.1"/>
    <property type="molecule type" value="Genomic_DNA"/>
</dbReference>
<dbReference type="RefSeq" id="WP_011229616.1">
    <property type="nucleotide sequence ID" value="NC_006510.1"/>
</dbReference>
<dbReference type="SMR" id="Q5L402"/>
<dbReference type="STRING" id="235909.GK0101"/>
<dbReference type="GeneID" id="32062089"/>
<dbReference type="KEGG" id="gka:GK0101"/>
<dbReference type="eggNOG" id="COG0048">
    <property type="taxonomic scope" value="Bacteria"/>
</dbReference>
<dbReference type="HOGENOM" id="CLU_104295_1_2_9"/>
<dbReference type="Proteomes" id="UP000001172">
    <property type="component" value="Chromosome"/>
</dbReference>
<dbReference type="GO" id="GO:0015935">
    <property type="term" value="C:small ribosomal subunit"/>
    <property type="evidence" value="ECO:0007669"/>
    <property type="project" value="InterPro"/>
</dbReference>
<dbReference type="GO" id="GO:0019843">
    <property type="term" value="F:rRNA binding"/>
    <property type="evidence" value="ECO:0007669"/>
    <property type="project" value="UniProtKB-UniRule"/>
</dbReference>
<dbReference type="GO" id="GO:0003735">
    <property type="term" value="F:structural constituent of ribosome"/>
    <property type="evidence" value="ECO:0007669"/>
    <property type="project" value="InterPro"/>
</dbReference>
<dbReference type="GO" id="GO:0000049">
    <property type="term" value="F:tRNA binding"/>
    <property type="evidence" value="ECO:0007669"/>
    <property type="project" value="UniProtKB-UniRule"/>
</dbReference>
<dbReference type="GO" id="GO:0006412">
    <property type="term" value="P:translation"/>
    <property type="evidence" value="ECO:0007669"/>
    <property type="project" value="UniProtKB-UniRule"/>
</dbReference>
<dbReference type="CDD" id="cd03368">
    <property type="entry name" value="Ribosomal_S12"/>
    <property type="match status" value="1"/>
</dbReference>
<dbReference type="FunFam" id="2.40.50.140:FF:000001">
    <property type="entry name" value="30S ribosomal protein S12"/>
    <property type="match status" value="1"/>
</dbReference>
<dbReference type="Gene3D" id="2.40.50.140">
    <property type="entry name" value="Nucleic acid-binding proteins"/>
    <property type="match status" value="1"/>
</dbReference>
<dbReference type="HAMAP" id="MF_00403_B">
    <property type="entry name" value="Ribosomal_uS12_B"/>
    <property type="match status" value="1"/>
</dbReference>
<dbReference type="InterPro" id="IPR012340">
    <property type="entry name" value="NA-bd_OB-fold"/>
</dbReference>
<dbReference type="InterPro" id="IPR006032">
    <property type="entry name" value="Ribosomal_uS12"/>
</dbReference>
<dbReference type="InterPro" id="IPR005679">
    <property type="entry name" value="Ribosomal_uS12_bac"/>
</dbReference>
<dbReference type="NCBIfam" id="TIGR00981">
    <property type="entry name" value="rpsL_bact"/>
    <property type="match status" value="1"/>
</dbReference>
<dbReference type="PANTHER" id="PTHR11652">
    <property type="entry name" value="30S RIBOSOMAL PROTEIN S12 FAMILY MEMBER"/>
    <property type="match status" value="1"/>
</dbReference>
<dbReference type="Pfam" id="PF00164">
    <property type="entry name" value="Ribosom_S12_S23"/>
    <property type="match status" value="1"/>
</dbReference>
<dbReference type="PIRSF" id="PIRSF002133">
    <property type="entry name" value="Ribosomal_S12/S23"/>
    <property type="match status" value="1"/>
</dbReference>
<dbReference type="PRINTS" id="PR01034">
    <property type="entry name" value="RIBOSOMALS12"/>
</dbReference>
<dbReference type="SUPFAM" id="SSF50249">
    <property type="entry name" value="Nucleic acid-binding proteins"/>
    <property type="match status" value="1"/>
</dbReference>
<dbReference type="PROSITE" id="PS00055">
    <property type="entry name" value="RIBOSOMAL_S12"/>
    <property type="match status" value="1"/>
</dbReference>
<keyword id="KW-1185">Reference proteome</keyword>
<keyword id="KW-0687">Ribonucleoprotein</keyword>
<keyword id="KW-0689">Ribosomal protein</keyword>
<keyword id="KW-0694">RNA-binding</keyword>
<keyword id="KW-0699">rRNA-binding</keyword>
<keyword id="KW-0820">tRNA-binding</keyword>
<organism>
    <name type="scientific">Geobacillus kaustophilus (strain HTA426)</name>
    <dbReference type="NCBI Taxonomy" id="235909"/>
    <lineage>
        <taxon>Bacteria</taxon>
        <taxon>Bacillati</taxon>
        <taxon>Bacillota</taxon>
        <taxon>Bacilli</taxon>
        <taxon>Bacillales</taxon>
        <taxon>Anoxybacillaceae</taxon>
        <taxon>Geobacillus</taxon>
        <taxon>Geobacillus thermoleovorans group</taxon>
    </lineage>
</organism>